<gene>
    <name evidence="1" type="primary">ureA</name>
    <name type="ordered locus">CGSHiEE_00285</name>
</gene>
<keyword id="KW-0963">Cytoplasm</keyword>
<keyword id="KW-0378">Hydrolase</keyword>
<sequence length="100" mass="11099">MHLTSREQEKLMLFLAGELAAKRKARGVKLNYPETIAYIASHLQEAARDGMSVAEVMQYGSTLLTVDDVMEGVAEMVHEVQIEATFPDGTKLVTVHNPIR</sequence>
<dbReference type="EC" id="3.5.1.5" evidence="1"/>
<dbReference type="EMBL" id="CP000671">
    <property type="protein sequence ID" value="ABQ97555.1"/>
    <property type="molecule type" value="Genomic_DNA"/>
</dbReference>
<dbReference type="SMR" id="A5U9V4"/>
<dbReference type="KEGG" id="hip:CGSHiEE_00285"/>
<dbReference type="HOGENOM" id="CLU_145825_1_0_6"/>
<dbReference type="UniPathway" id="UPA00258">
    <property type="reaction ID" value="UER00370"/>
</dbReference>
<dbReference type="GO" id="GO:0005737">
    <property type="term" value="C:cytoplasm"/>
    <property type="evidence" value="ECO:0007669"/>
    <property type="project" value="UniProtKB-SubCell"/>
</dbReference>
<dbReference type="GO" id="GO:0016151">
    <property type="term" value="F:nickel cation binding"/>
    <property type="evidence" value="ECO:0007669"/>
    <property type="project" value="InterPro"/>
</dbReference>
<dbReference type="GO" id="GO:0009039">
    <property type="term" value="F:urease activity"/>
    <property type="evidence" value="ECO:0007669"/>
    <property type="project" value="UniProtKB-UniRule"/>
</dbReference>
<dbReference type="GO" id="GO:0043419">
    <property type="term" value="P:urea catabolic process"/>
    <property type="evidence" value="ECO:0007669"/>
    <property type="project" value="UniProtKB-UniRule"/>
</dbReference>
<dbReference type="CDD" id="cd00390">
    <property type="entry name" value="Urease_gamma"/>
    <property type="match status" value="1"/>
</dbReference>
<dbReference type="Gene3D" id="3.30.280.10">
    <property type="entry name" value="Urease, gamma-like subunit"/>
    <property type="match status" value="1"/>
</dbReference>
<dbReference type="HAMAP" id="MF_00739">
    <property type="entry name" value="Urease_gamma"/>
    <property type="match status" value="1"/>
</dbReference>
<dbReference type="InterPro" id="IPR012010">
    <property type="entry name" value="Urease_gamma"/>
</dbReference>
<dbReference type="InterPro" id="IPR002026">
    <property type="entry name" value="Urease_gamma/gamma-beta_su"/>
</dbReference>
<dbReference type="InterPro" id="IPR036463">
    <property type="entry name" value="Urease_gamma_sf"/>
</dbReference>
<dbReference type="InterPro" id="IPR050069">
    <property type="entry name" value="Urease_subunit"/>
</dbReference>
<dbReference type="NCBIfam" id="NF009712">
    <property type="entry name" value="PRK13241.1"/>
    <property type="match status" value="1"/>
</dbReference>
<dbReference type="NCBIfam" id="TIGR00193">
    <property type="entry name" value="urease_gam"/>
    <property type="match status" value="1"/>
</dbReference>
<dbReference type="PANTHER" id="PTHR33569">
    <property type="entry name" value="UREASE"/>
    <property type="match status" value="1"/>
</dbReference>
<dbReference type="PANTHER" id="PTHR33569:SF1">
    <property type="entry name" value="UREASE"/>
    <property type="match status" value="1"/>
</dbReference>
<dbReference type="Pfam" id="PF00547">
    <property type="entry name" value="Urease_gamma"/>
    <property type="match status" value="1"/>
</dbReference>
<dbReference type="PIRSF" id="PIRSF001223">
    <property type="entry name" value="Urease_gamma"/>
    <property type="match status" value="1"/>
</dbReference>
<dbReference type="SUPFAM" id="SSF54111">
    <property type="entry name" value="Urease, gamma-subunit"/>
    <property type="match status" value="1"/>
</dbReference>
<feature type="chain" id="PRO_1000046328" description="Urease subunit gamma">
    <location>
        <begin position="1"/>
        <end position="100"/>
    </location>
</feature>
<name>URE3_HAEIE</name>
<organism>
    <name type="scientific">Haemophilus influenzae (strain PittEE)</name>
    <dbReference type="NCBI Taxonomy" id="374930"/>
    <lineage>
        <taxon>Bacteria</taxon>
        <taxon>Pseudomonadati</taxon>
        <taxon>Pseudomonadota</taxon>
        <taxon>Gammaproteobacteria</taxon>
        <taxon>Pasteurellales</taxon>
        <taxon>Pasteurellaceae</taxon>
        <taxon>Haemophilus</taxon>
    </lineage>
</organism>
<accession>A5U9V4</accession>
<reference key="1">
    <citation type="journal article" date="2007" name="Genome Biol.">
        <title>Characterization and modeling of the Haemophilus influenzae core and supragenomes based on the complete genomic sequences of Rd and 12 clinical nontypeable strains.</title>
        <authorList>
            <person name="Hogg J.S."/>
            <person name="Hu F.Z."/>
            <person name="Janto B."/>
            <person name="Boissy R."/>
            <person name="Hayes J."/>
            <person name="Keefe R."/>
            <person name="Post J.C."/>
            <person name="Ehrlich G.D."/>
        </authorList>
    </citation>
    <scope>NUCLEOTIDE SEQUENCE [LARGE SCALE GENOMIC DNA]</scope>
    <source>
        <strain>PittEE</strain>
    </source>
</reference>
<evidence type="ECO:0000255" key="1">
    <source>
        <dbReference type="HAMAP-Rule" id="MF_00739"/>
    </source>
</evidence>
<proteinExistence type="inferred from homology"/>
<comment type="catalytic activity">
    <reaction evidence="1">
        <text>urea + 2 H2O + H(+) = hydrogencarbonate + 2 NH4(+)</text>
        <dbReference type="Rhea" id="RHEA:20557"/>
        <dbReference type="ChEBI" id="CHEBI:15377"/>
        <dbReference type="ChEBI" id="CHEBI:15378"/>
        <dbReference type="ChEBI" id="CHEBI:16199"/>
        <dbReference type="ChEBI" id="CHEBI:17544"/>
        <dbReference type="ChEBI" id="CHEBI:28938"/>
        <dbReference type="EC" id="3.5.1.5"/>
    </reaction>
</comment>
<comment type="pathway">
    <text evidence="1">Nitrogen metabolism; urea degradation; CO(2) and NH(3) from urea (urease route): step 1/1.</text>
</comment>
<comment type="subunit">
    <text evidence="1">Heterotrimer of UreA (gamma), UreB (beta) and UreC (alpha) subunits. Three heterotrimers associate to form the active enzyme.</text>
</comment>
<comment type="subcellular location">
    <subcellularLocation>
        <location evidence="1">Cytoplasm</location>
    </subcellularLocation>
</comment>
<comment type="similarity">
    <text evidence="1">Belongs to the urease gamma subunit family.</text>
</comment>
<protein>
    <recommendedName>
        <fullName evidence="1">Urease subunit gamma</fullName>
        <ecNumber evidence="1">3.5.1.5</ecNumber>
    </recommendedName>
    <alternativeName>
        <fullName evidence="1">Urea amidohydrolase subunit gamma</fullName>
    </alternativeName>
</protein>